<accession>B2RJE9</accession>
<proteinExistence type="inferred from homology"/>
<dbReference type="EC" id="2.1.1.163" evidence="1"/>
<dbReference type="EMBL" id="AP009380">
    <property type="protein sequence ID" value="BAG33494.1"/>
    <property type="molecule type" value="Genomic_DNA"/>
</dbReference>
<dbReference type="RefSeq" id="WP_012457927.1">
    <property type="nucleotide sequence ID" value="NC_010729.1"/>
</dbReference>
<dbReference type="SMR" id="B2RJE9"/>
<dbReference type="GeneID" id="29256189"/>
<dbReference type="KEGG" id="pgn:PGN_0975"/>
<dbReference type="eggNOG" id="COG2226">
    <property type="taxonomic scope" value="Bacteria"/>
</dbReference>
<dbReference type="HOGENOM" id="CLU_037990_0_0_10"/>
<dbReference type="OrthoDB" id="9808140at2"/>
<dbReference type="BioCyc" id="PGIN431947:G1G2V-1100-MONOMER"/>
<dbReference type="UniPathway" id="UPA00079">
    <property type="reaction ID" value="UER00169"/>
</dbReference>
<dbReference type="Proteomes" id="UP000008842">
    <property type="component" value="Chromosome"/>
</dbReference>
<dbReference type="GO" id="GO:0043770">
    <property type="term" value="F:demethylmenaquinone methyltransferase activity"/>
    <property type="evidence" value="ECO:0007669"/>
    <property type="project" value="UniProtKB-UniRule"/>
</dbReference>
<dbReference type="GO" id="GO:0009234">
    <property type="term" value="P:menaquinone biosynthetic process"/>
    <property type="evidence" value="ECO:0007669"/>
    <property type="project" value="UniProtKB-UniRule"/>
</dbReference>
<dbReference type="GO" id="GO:0032259">
    <property type="term" value="P:methylation"/>
    <property type="evidence" value="ECO:0007669"/>
    <property type="project" value="UniProtKB-KW"/>
</dbReference>
<dbReference type="CDD" id="cd02440">
    <property type="entry name" value="AdoMet_MTases"/>
    <property type="match status" value="1"/>
</dbReference>
<dbReference type="Gene3D" id="3.40.50.150">
    <property type="entry name" value="Vaccinia Virus protein VP39"/>
    <property type="match status" value="1"/>
</dbReference>
<dbReference type="HAMAP" id="MF_01813">
    <property type="entry name" value="MenG_UbiE_methyltr"/>
    <property type="match status" value="1"/>
</dbReference>
<dbReference type="InterPro" id="IPR029063">
    <property type="entry name" value="SAM-dependent_MTases_sf"/>
</dbReference>
<dbReference type="InterPro" id="IPR004033">
    <property type="entry name" value="UbiE/COQ5_MeTrFase"/>
</dbReference>
<dbReference type="NCBIfam" id="TIGR01934">
    <property type="entry name" value="MenG_MenH_UbiE"/>
    <property type="match status" value="1"/>
</dbReference>
<dbReference type="NCBIfam" id="NF001244">
    <property type="entry name" value="PRK00216.1-5"/>
    <property type="match status" value="1"/>
</dbReference>
<dbReference type="PANTHER" id="PTHR43591:SF24">
    <property type="entry name" value="2-METHOXY-6-POLYPRENYL-1,4-BENZOQUINOL METHYLASE, MITOCHONDRIAL"/>
    <property type="match status" value="1"/>
</dbReference>
<dbReference type="PANTHER" id="PTHR43591">
    <property type="entry name" value="METHYLTRANSFERASE"/>
    <property type="match status" value="1"/>
</dbReference>
<dbReference type="Pfam" id="PF01209">
    <property type="entry name" value="Ubie_methyltran"/>
    <property type="match status" value="1"/>
</dbReference>
<dbReference type="SUPFAM" id="SSF53335">
    <property type="entry name" value="S-adenosyl-L-methionine-dependent methyltransferases"/>
    <property type="match status" value="1"/>
</dbReference>
<dbReference type="PROSITE" id="PS51608">
    <property type="entry name" value="SAM_MT_UBIE"/>
    <property type="match status" value="1"/>
</dbReference>
<name>MENG_PORG3</name>
<keyword id="KW-0474">Menaquinone biosynthesis</keyword>
<keyword id="KW-0489">Methyltransferase</keyword>
<keyword id="KW-0949">S-adenosyl-L-methionine</keyword>
<keyword id="KW-0808">Transferase</keyword>
<reference key="1">
    <citation type="journal article" date="2008" name="DNA Res.">
        <title>Determination of the genome sequence of Porphyromonas gingivalis strain ATCC 33277 and genomic comparison with strain W83 revealed extensive genome rearrangements in P. gingivalis.</title>
        <authorList>
            <person name="Naito M."/>
            <person name="Hirakawa H."/>
            <person name="Yamashita A."/>
            <person name="Ohara N."/>
            <person name="Shoji M."/>
            <person name="Yukitake H."/>
            <person name="Nakayama K."/>
            <person name="Toh H."/>
            <person name="Yoshimura F."/>
            <person name="Kuhara S."/>
            <person name="Hattori M."/>
            <person name="Hayashi T."/>
            <person name="Nakayama K."/>
        </authorList>
    </citation>
    <scope>NUCLEOTIDE SEQUENCE [LARGE SCALE GENOMIC DNA]</scope>
    <source>
        <strain>ATCC 33277 / DSM 20709 / CIP 103683 / JCM 12257 / NCTC 11834 / 2561</strain>
    </source>
</reference>
<feature type="chain" id="PRO_1000187786" description="Demethylmenaquinone methyltransferase">
    <location>
        <begin position="1"/>
        <end position="245"/>
    </location>
</feature>
<feature type="binding site" evidence="1">
    <location>
        <position position="69"/>
    </location>
    <ligand>
        <name>S-adenosyl-L-methionine</name>
        <dbReference type="ChEBI" id="CHEBI:59789"/>
    </ligand>
</feature>
<feature type="binding site" evidence="1">
    <location>
        <position position="90"/>
    </location>
    <ligand>
        <name>S-adenosyl-L-methionine</name>
        <dbReference type="ChEBI" id="CHEBI:59789"/>
    </ligand>
</feature>
<feature type="binding site" evidence="1">
    <location>
        <begin position="118"/>
        <end position="119"/>
    </location>
    <ligand>
        <name>S-adenosyl-L-methionine</name>
        <dbReference type="ChEBI" id="CHEBI:59789"/>
    </ligand>
</feature>
<sequence length="245" mass="28057">MQSPEKITPYDTECPKNEQVEAMFNHIAGHYDRLNHLFSWGMDRVWRQKAIRMIEPFAPHTVLDVATGTGDLAIEICRHIPSVKQVTGVDLSLEMMRIGEQKVRSENLDNRITFMQKDCLDLPFADHSFDAVTVAFGLRNFQNIKLGLEEMYRVLNEGAPLMILELSRPVSFPWKQGYNFYASHVIPVVGRFLSQDAEAYTYLPESIAAMPQREELADLMLSVGFREAYYRSLSLEVATVYMGLK</sequence>
<comment type="function">
    <text evidence="1">Methyltransferase required for the conversion of demethylmenaquinol (DMKH2) to menaquinol (MKH2).</text>
</comment>
<comment type="catalytic activity">
    <reaction evidence="1">
        <text>a 2-demethylmenaquinol + S-adenosyl-L-methionine = a menaquinol + S-adenosyl-L-homocysteine + H(+)</text>
        <dbReference type="Rhea" id="RHEA:42640"/>
        <dbReference type="Rhea" id="RHEA-COMP:9539"/>
        <dbReference type="Rhea" id="RHEA-COMP:9563"/>
        <dbReference type="ChEBI" id="CHEBI:15378"/>
        <dbReference type="ChEBI" id="CHEBI:18151"/>
        <dbReference type="ChEBI" id="CHEBI:55437"/>
        <dbReference type="ChEBI" id="CHEBI:57856"/>
        <dbReference type="ChEBI" id="CHEBI:59789"/>
        <dbReference type="EC" id="2.1.1.163"/>
    </reaction>
</comment>
<comment type="pathway">
    <text evidence="1">Quinol/quinone metabolism; menaquinone biosynthesis; menaquinol from 1,4-dihydroxy-2-naphthoate: step 2/2.</text>
</comment>
<comment type="similarity">
    <text evidence="1">Belongs to the class I-like SAM-binding methyltransferase superfamily. MenG/UbiE family.</text>
</comment>
<gene>
    <name evidence="1" type="primary">menG</name>
    <name type="ordered locus">PGN_0975</name>
</gene>
<protein>
    <recommendedName>
        <fullName evidence="1">Demethylmenaquinone methyltransferase</fullName>
        <ecNumber evidence="1">2.1.1.163</ecNumber>
    </recommendedName>
</protein>
<evidence type="ECO:0000255" key="1">
    <source>
        <dbReference type="HAMAP-Rule" id="MF_01813"/>
    </source>
</evidence>
<organism>
    <name type="scientific">Porphyromonas gingivalis (strain ATCC 33277 / DSM 20709 / CIP 103683 / JCM 12257 / NCTC 11834 / 2561)</name>
    <dbReference type="NCBI Taxonomy" id="431947"/>
    <lineage>
        <taxon>Bacteria</taxon>
        <taxon>Pseudomonadati</taxon>
        <taxon>Bacteroidota</taxon>
        <taxon>Bacteroidia</taxon>
        <taxon>Bacteroidales</taxon>
        <taxon>Porphyromonadaceae</taxon>
        <taxon>Porphyromonas</taxon>
    </lineage>
</organism>